<dbReference type="EC" id="6.3.5.3" evidence="1"/>
<dbReference type="EMBL" id="AE004091">
    <property type="protein sequence ID" value="AAG07150.1"/>
    <property type="molecule type" value="Genomic_DNA"/>
</dbReference>
<dbReference type="PIR" id="B83175">
    <property type="entry name" value="B83175"/>
</dbReference>
<dbReference type="RefSeq" id="NP_252452.1">
    <property type="nucleotide sequence ID" value="NC_002516.2"/>
</dbReference>
<dbReference type="RefSeq" id="WP_003113821.1">
    <property type="nucleotide sequence ID" value="NC_002516.2"/>
</dbReference>
<dbReference type="SMR" id="Q9HXN2"/>
<dbReference type="FunCoup" id="Q9HXN2">
    <property type="interactions" value="690"/>
</dbReference>
<dbReference type="STRING" id="208964.PA3763"/>
<dbReference type="PaxDb" id="208964-PA3763"/>
<dbReference type="GeneID" id="879752"/>
<dbReference type="KEGG" id="pae:PA3763"/>
<dbReference type="PATRIC" id="fig|208964.12.peg.3938"/>
<dbReference type="PseudoCAP" id="PA3763"/>
<dbReference type="HOGENOM" id="CLU_001031_0_2_6"/>
<dbReference type="InParanoid" id="Q9HXN2"/>
<dbReference type="OrthoDB" id="9804441at2"/>
<dbReference type="PhylomeDB" id="Q9HXN2"/>
<dbReference type="BioCyc" id="PAER208964:G1FZ6-3834-MONOMER"/>
<dbReference type="UniPathway" id="UPA00074">
    <property type="reaction ID" value="UER00128"/>
</dbReference>
<dbReference type="Proteomes" id="UP000002438">
    <property type="component" value="Chromosome"/>
</dbReference>
<dbReference type="GO" id="GO:0005737">
    <property type="term" value="C:cytoplasm"/>
    <property type="evidence" value="ECO:0000318"/>
    <property type="project" value="GO_Central"/>
</dbReference>
<dbReference type="GO" id="GO:0005524">
    <property type="term" value="F:ATP binding"/>
    <property type="evidence" value="ECO:0007669"/>
    <property type="project" value="UniProtKB-UniRule"/>
</dbReference>
<dbReference type="GO" id="GO:0046872">
    <property type="term" value="F:metal ion binding"/>
    <property type="evidence" value="ECO:0007669"/>
    <property type="project" value="UniProtKB-KW"/>
</dbReference>
<dbReference type="GO" id="GO:0004642">
    <property type="term" value="F:phosphoribosylformylglycinamidine synthase activity"/>
    <property type="evidence" value="ECO:0000318"/>
    <property type="project" value="GO_Central"/>
</dbReference>
<dbReference type="GO" id="GO:0006189">
    <property type="term" value="P:'de novo' IMP biosynthetic process"/>
    <property type="evidence" value="ECO:0007669"/>
    <property type="project" value="UniProtKB-UniRule"/>
</dbReference>
<dbReference type="GO" id="GO:0006164">
    <property type="term" value="P:purine nucleotide biosynthetic process"/>
    <property type="evidence" value="ECO:0000318"/>
    <property type="project" value="GO_Central"/>
</dbReference>
<dbReference type="CDD" id="cd01740">
    <property type="entry name" value="GATase1_FGAR_AT"/>
    <property type="match status" value="1"/>
</dbReference>
<dbReference type="CDD" id="cd02203">
    <property type="entry name" value="PurL_repeat1"/>
    <property type="match status" value="1"/>
</dbReference>
<dbReference type="CDD" id="cd02204">
    <property type="entry name" value="PurL_repeat2"/>
    <property type="match status" value="1"/>
</dbReference>
<dbReference type="FunFam" id="1.10.8.750:FF:000002">
    <property type="entry name" value="Phosphoribosylformylglycinamidine synthase"/>
    <property type="match status" value="1"/>
</dbReference>
<dbReference type="FunFam" id="3.30.1330.10:FF:000002">
    <property type="entry name" value="Phosphoribosylformylglycinamidine synthase"/>
    <property type="match status" value="1"/>
</dbReference>
<dbReference type="FunFam" id="3.30.1330.10:FF:000005">
    <property type="entry name" value="Phosphoribosylformylglycinamidine synthase"/>
    <property type="match status" value="1"/>
</dbReference>
<dbReference type="FunFam" id="3.40.50.880:FF:000008">
    <property type="entry name" value="Phosphoribosylformylglycinamidine synthase"/>
    <property type="match status" value="1"/>
</dbReference>
<dbReference type="FunFam" id="3.90.650.10:FF:000002">
    <property type="entry name" value="Phosphoribosylformylglycinamidine synthase"/>
    <property type="match status" value="1"/>
</dbReference>
<dbReference type="FunFam" id="3.90.650.10:FF:000005">
    <property type="entry name" value="Phosphoribosylformylglycinamidine synthase"/>
    <property type="match status" value="1"/>
</dbReference>
<dbReference type="Gene3D" id="3.40.50.880">
    <property type="match status" value="1"/>
</dbReference>
<dbReference type="Gene3D" id="1.10.8.750">
    <property type="entry name" value="Phosphoribosylformylglycinamidine synthase, linker domain"/>
    <property type="match status" value="1"/>
</dbReference>
<dbReference type="Gene3D" id="3.90.650.10">
    <property type="entry name" value="PurM-like C-terminal domain"/>
    <property type="match status" value="2"/>
</dbReference>
<dbReference type="Gene3D" id="3.30.1330.10">
    <property type="entry name" value="PurM-like, N-terminal domain"/>
    <property type="match status" value="2"/>
</dbReference>
<dbReference type="HAMAP" id="MF_00419">
    <property type="entry name" value="PurL_1"/>
    <property type="match status" value="1"/>
</dbReference>
<dbReference type="InterPro" id="IPR029062">
    <property type="entry name" value="Class_I_gatase-like"/>
</dbReference>
<dbReference type="InterPro" id="IPR040707">
    <property type="entry name" value="FGAR-AT_N"/>
</dbReference>
<dbReference type="InterPro" id="IPR055181">
    <property type="entry name" value="FGAR-AT_PurM_N-like"/>
</dbReference>
<dbReference type="InterPro" id="IPR010073">
    <property type="entry name" value="PurL_large"/>
</dbReference>
<dbReference type="InterPro" id="IPR041609">
    <property type="entry name" value="PurL_linker"/>
</dbReference>
<dbReference type="InterPro" id="IPR010918">
    <property type="entry name" value="PurM-like_C_dom"/>
</dbReference>
<dbReference type="InterPro" id="IPR036676">
    <property type="entry name" value="PurM-like_C_sf"/>
</dbReference>
<dbReference type="InterPro" id="IPR036921">
    <property type="entry name" value="PurM-like_N_sf"/>
</dbReference>
<dbReference type="InterPro" id="IPR036604">
    <property type="entry name" value="PurS-like_sf"/>
</dbReference>
<dbReference type="NCBIfam" id="TIGR01735">
    <property type="entry name" value="FGAM_synt"/>
    <property type="match status" value="1"/>
</dbReference>
<dbReference type="NCBIfam" id="NF003672">
    <property type="entry name" value="PRK05297.1"/>
    <property type="match status" value="1"/>
</dbReference>
<dbReference type="PANTHER" id="PTHR10099">
    <property type="entry name" value="PHOSPHORIBOSYLFORMYLGLYCINAMIDINE SYNTHASE"/>
    <property type="match status" value="1"/>
</dbReference>
<dbReference type="PANTHER" id="PTHR10099:SF1">
    <property type="entry name" value="PHOSPHORIBOSYLFORMYLGLYCINAMIDINE SYNTHASE"/>
    <property type="match status" value="1"/>
</dbReference>
<dbReference type="Pfam" id="PF02769">
    <property type="entry name" value="AIRS_C"/>
    <property type="match status" value="2"/>
</dbReference>
<dbReference type="Pfam" id="PF18072">
    <property type="entry name" value="FGAR-AT_linker"/>
    <property type="match status" value="1"/>
</dbReference>
<dbReference type="Pfam" id="PF18076">
    <property type="entry name" value="FGAR-AT_N"/>
    <property type="match status" value="1"/>
</dbReference>
<dbReference type="Pfam" id="PF22689">
    <property type="entry name" value="FGAR-AT_PurM_N-like"/>
    <property type="match status" value="1"/>
</dbReference>
<dbReference type="Pfam" id="PF13507">
    <property type="entry name" value="GATase_5"/>
    <property type="match status" value="1"/>
</dbReference>
<dbReference type="SMART" id="SM01211">
    <property type="entry name" value="GATase_5"/>
    <property type="match status" value="1"/>
</dbReference>
<dbReference type="SUPFAM" id="SSF52317">
    <property type="entry name" value="Class I glutamine amidotransferase-like"/>
    <property type="match status" value="1"/>
</dbReference>
<dbReference type="SUPFAM" id="SSF109736">
    <property type="entry name" value="FGAM synthase PurL, linker domain"/>
    <property type="match status" value="1"/>
</dbReference>
<dbReference type="SUPFAM" id="SSF56042">
    <property type="entry name" value="PurM C-terminal domain-like"/>
    <property type="match status" value="2"/>
</dbReference>
<dbReference type="SUPFAM" id="SSF55326">
    <property type="entry name" value="PurM N-terminal domain-like"/>
    <property type="match status" value="2"/>
</dbReference>
<dbReference type="SUPFAM" id="SSF82697">
    <property type="entry name" value="PurS-like"/>
    <property type="match status" value="1"/>
</dbReference>
<dbReference type="PROSITE" id="PS51273">
    <property type="entry name" value="GATASE_TYPE_1"/>
    <property type="match status" value="1"/>
</dbReference>
<name>PUR4_PSEAE</name>
<keyword id="KW-0067">ATP-binding</keyword>
<keyword id="KW-0963">Cytoplasm</keyword>
<keyword id="KW-0315">Glutamine amidotransferase</keyword>
<keyword id="KW-0436">Ligase</keyword>
<keyword id="KW-0460">Magnesium</keyword>
<keyword id="KW-0479">Metal-binding</keyword>
<keyword id="KW-0547">Nucleotide-binding</keyword>
<keyword id="KW-0658">Purine biosynthesis</keyword>
<keyword id="KW-1185">Reference proteome</keyword>
<sequence length="1298" mass="140647">MLILRGAPALSAFRHGKLLEQLTQHVPAVTGLYAEFAHFADVTGALTADEEQVLARLLKYGPSVPVQEPSGRLFLVVPRFGTISPWSSKASDIARNCGLAKIDRLERGIAYYVQGELSESDAQQVAARLHDRMTQLVLDRLEGAAELFSHAQPRPLTAVDVLGGGRAALEKANVELGLALAEDEIDYLLKSFGELGRNPHDVELMMFAQANSEHCRHKIFNASWDIDGQAQDKSLFGMIKNTYEMNREGVLSAYKDNAAVIVGHVAGRFFPDPQTREYAASREPVQILMKVETHNHPTAIAPFPGASTGSGGEIRDEGATGRGAKPKAGLTGFTVSNLQIPGFEQPWEVPYGKPERIVTALDIMVEGPLGGAAFNNEFGRPALTGYFRTFEQKIATPHGEEVRGYHKPIMLAGGMGNIRDEHVQKGEISVGAKLIVLGGPAMLIGLGGGAASSMATGASSADLDFASVQRDNPEMERRCQEVIDRCWQLGERNPISFIHDVGAGGLSNALPELINDGGRGGRFELRAVPNDEPGMSPLEIWCNESQERYVLSVDAADFETFKAICERERCPFAVVGEAIEQRQLTVADSHFDNKPVDMPLEVLLGKAPRMHRAVTREAELGDDFDAAGLELQESVERVLRHPAVASKSFLITIGDRTITGLVARDQMVGPWQVPVADCAVTATSFDVYTGEAMAMGERTPLALLDAPASGRMAIGETVTNLAAARVGKLSDIKLSANWMAAAGHPGEDARLYDTVKAVGMELCPELGITIPVGKDSMSMKTRWQDNGEDKSVTSPVSLIVTGFAPVADVRQSLTPQLRLDKGETDLILIDLGRGKNRLGGSILAQVHGKLGRAVPDVDDAEDLKAFFAVIQGLNADGHILAYHDRSDGGLITSVLEMAFAGHCGVELNLDALADSREELAAVLFSEELGAVIQVREGATPEVLAQFSAAGLDDCVAVIGQPVNGYEINLNYNGETVYSAQRRILQRIWSETSYQIQRLRDNADCAEQEFDALLDEDNPGLSIKLSYDVNDDIAAPYIKKGVRPKVAILREQGVNGQVEMAAAFDRAGFAAIDVHMSDILAGRVDLDAFKGLVACGGFSYGDVLGAGEGWAKSILFNARARDGFQAFFARKDSFALGVCNGCQMMSNLHELIPGTEFWPHFVRNRSEQFEARVAMVQVQESSSIFLQGMAGSRLPIAIAHGEGHAEFESEEALLEADLSGCVSLRFVDNHGKVTEAYPANPNGSPRGITGLSSRDGRVTIMMPHPERVFRAVQNSWRPDDWQEDGGWLRMFRNARVWVD</sequence>
<reference key="1">
    <citation type="journal article" date="2000" name="Nature">
        <title>Complete genome sequence of Pseudomonas aeruginosa PAO1, an opportunistic pathogen.</title>
        <authorList>
            <person name="Stover C.K."/>
            <person name="Pham X.-Q.T."/>
            <person name="Erwin A.L."/>
            <person name="Mizoguchi S.D."/>
            <person name="Warrener P."/>
            <person name="Hickey M.J."/>
            <person name="Brinkman F.S.L."/>
            <person name="Hufnagle W.O."/>
            <person name="Kowalik D.J."/>
            <person name="Lagrou M."/>
            <person name="Garber R.L."/>
            <person name="Goltry L."/>
            <person name="Tolentino E."/>
            <person name="Westbrock-Wadman S."/>
            <person name="Yuan Y."/>
            <person name="Brody L.L."/>
            <person name="Coulter S.N."/>
            <person name="Folger K.R."/>
            <person name="Kas A."/>
            <person name="Larbig K."/>
            <person name="Lim R.M."/>
            <person name="Smith K.A."/>
            <person name="Spencer D.H."/>
            <person name="Wong G.K.-S."/>
            <person name="Wu Z."/>
            <person name="Paulsen I.T."/>
            <person name="Reizer J."/>
            <person name="Saier M.H. Jr."/>
            <person name="Hancock R.E.W."/>
            <person name="Lory S."/>
            <person name="Olson M.V."/>
        </authorList>
    </citation>
    <scope>NUCLEOTIDE SEQUENCE [LARGE SCALE GENOMIC DNA]</scope>
    <source>
        <strain>ATCC 15692 / DSM 22644 / CIP 104116 / JCM 14847 / LMG 12228 / 1C / PRS 101 / PAO1</strain>
    </source>
</reference>
<feature type="chain" id="PRO_0000100413" description="Phosphoribosylformylglycinamidine synthase">
    <location>
        <begin position="1"/>
        <end position="1298"/>
    </location>
</feature>
<feature type="domain" description="Glutamine amidotransferase type-1" evidence="1">
    <location>
        <begin position="1045"/>
        <end position="1298"/>
    </location>
</feature>
<feature type="region of interest" description="Disordered" evidence="2">
    <location>
        <begin position="298"/>
        <end position="328"/>
    </location>
</feature>
<feature type="active site" description="Nucleophile" evidence="1">
    <location>
        <position position="1138"/>
    </location>
</feature>
<feature type="active site" evidence="1">
    <location>
        <position position="1263"/>
    </location>
</feature>
<feature type="active site" evidence="1">
    <location>
        <position position="1265"/>
    </location>
</feature>
<feature type="binding site" evidence="1">
    <location>
        <begin position="305"/>
        <end position="316"/>
    </location>
    <ligand>
        <name>ATP</name>
        <dbReference type="ChEBI" id="CHEBI:30616"/>
    </ligand>
</feature>
<feature type="binding site" evidence="1">
    <location>
        <begin position="384"/>
        <end position="386"/>
    </location>
    <ligand>
        <name>ATP</name>
        <dbReference type="ChEBI" id="CHEBI:30616"/>
    </ligand>
</feature>
<feature type="binding site" evidence="1">
    <location>
        <position position="676"/>
    </location>
    <ligand>
        <name>ATP</name>
        <dbReference type="ChEBI" id="CHEBI:30616"/>
    </ligand>
</feature>
<feature type="binding site" evidence="1">
    <location>
        <position position="677"/>
    </location>
    <ligand>
        <name>Mg(2+)</name>
        <dbReference type="ChEBI" id="CHEBI:18420"/>
    </ligand>
</feature>
<feature type="binding site" evidence="1">
    <location>
        <position position="716"/>
    </location>
    <ligand>
        <name>Mg(2+)</name>
        <dbReference type="ChEBI" id="CHEBI:18420"/>
    </ligand>
</feature>
<feature type="binding site" evidence="1">
    <location>
        <position position="720"/>
    </location>
    <ligand>
        <name>Mg(2+)</name>
        <dbReference type="ChEBI" id="CHEBI:18420"/>
    </ligand>
</feature>
<feature type="binding site" evidence="1">
    <location>
        <position position="884"/>
    </location>
    <ligand>
        <name>Mg(2+)</name>
        <dbReference type="ChEBI" id="CHEBI:18420"/>
    </ligand>
</feature>
<feature type="binding site" evidence="1">
    <location>
        <position position="886"/>
    </location>
    <ligand>
        <name>ATP</name>
        <dbReference type="ChEBI" id="CHEBI:30616"/>
    </ligand>
</feature>
<gene>
    <name evidence="1" type="primary">purL</name>
    <name type="ordered locus">PA3763</name>
</gene>
<comment type="function">
    <text evidence="1">Phosphoribosylformylglycinamidine synthase involved in the purines biosynthetic pathway. Catalyzes the ATP-dependent conversion of formylglycinamide ribonucleotide (FGAR) and glutamine to yield formylglycinamidine ribonucleotide (FGAM) and glutamate.</text>
</comment>
<comment type="catalytic activity">
    <reaction evidence="1">
        <text>N(2)-formyl-N(1)-(5-phospho-beta-D-ribosyl)glycinamide + L-glutamine + ATP + H2O = 2-formamido-N(1)-(5-O-phospho-beta-D-ribosyl)acetamidine + L-glutamate + ADP + phosphate + H(+)</text>
        <dbReference type="Rhea" id="RHEA:17129"/>
        <dbReference type="ChEBI" id="CHEBI:15377"/>
        <dbReference type="ChEBI" id="CHEBI:15378"/>
        <dbReference type="ChEBI" id="CHEBI:29985"/>
        <dbReference type="ChEBI" id="CHEBI:30616"/>
        <dbReference type="ChEBI" id="CHEBI:43474"/>
        <dbReference type="ChEBI" id="CHEBI:58359"/>
        <dbReference type="ChEBI" id="CHEBI:147286"/>
        <dbReference type="ChEBI" id="CHEBI:147287"/>
        <dbReference type="ChEBI" id="CHEBI:456216"/>
        <dbReference type="EC" id="6.3.5.3"/>
    </reaction>
</comment>
<comment type="pathway">
    <text evidence="1">Purine metabolism; IMP biosynthesis via de novo pathway; 5-amino-1-(5-phospho-D-ribosyl)imidazole from N(2)-formyl-N(1)-(5-phospho-D-ribosyl)glycinamide: step 1/2.</text>
</comment>
<comment type="subunit">
    <text evidence="1">Monomer.</text>
</comment>
<comment type="subcellular location">
    <subcellularLocation>
        <location evidence="1">Cytoplasm</location>
    </subcellularLocation>
</comment>
<comment type="similarity">
    <text evidence="1">In the N-terminal section; belongs to the FGAMS family.</text>
</comment>
<organism>
    <name type="scientific">Pseudomonas aeruginosa (strain ATCC 15692 / DSM 22644 / CIP 104116 / JCM 14847 / LMG 12228 / 1C / PRS 101 / PAO1)</name>
    <dbReference type="NCBI Taxonomy" id="208964"/>
    <lineage>
        <taxon>Bacteria</taxon>
        <taxon>Pseudomonadati</taxon>
        <taxon>Pseudomonadota</taxon>
        <taxon>Gammaproteobacteria</taxon>
        <taxon>Pseudomonadales</taxon>
        <taxon>Pseudomonadaceae</taxon>
        <taxon>Pseudomonas</taxon>
    </lineage>
</organism>
<evidence type="ECO:0000255" key="1">
    <source>
        <dbReference type="HAMAP-Rule" id="MF_00419"/>
    </source>
</evidence>
<evidence type="ECO:0000256" key="2">
    <source>
        <dbReference type="SAM" id="MobiDB-lite"/>
    </source>
</evidence>
<accession>Q9HXN2</accession>
<proteinExistence type="inferred from homology"/>
<protein>
    <recommendedName>
        <fullName evidence="1">Phosphoribosylformylglycinamidine synthase</fullName>
        <shortName evidence="1">FGAM synthase</shortName>
        <shortName evidence="1">FGAMS</shortName>
        <ecNumber evidence="1">6.3.5.3</ecNumber>
    </recommendedName>
    <alternativeName>
        <fullName evidence="1">Formylglycinamide ribonucleotide amidotransferase</fullName>
        <shortName evidence="1">FGAR amidotransferase</shortName>
        <shortName evidence="1">FGAR-AT</shortName>
    </alternativeName>
</protein>